<sequence>MKTMFEKIWEDHLVGELDAGSYLIYIDRHLIHEVTSPQAFEGLKLAGRKVRRPEATFATMDHNVSTRTRDLSLADPVSAIQMQTLKKNCDENGIRVYDFQNPDQGIIHVIAPEMGLTHPGMTIVCGDSHTSTHGAFGALAFGIGTSEVEHVLATQTLVQKRAKTMEIRVDGKLSDKVTAKDIILAIIGKIGTAGATGYVIEYRGSAIQALSMEARMTICNMSIEAGARAGLIAPDETTFNYIQGKDFSPKGVEWDLAVKKWKHYVTDEGAKFDRTVILHADEIAPMVTWGTSPSQVVSIKGVVPDPKDANDPVEKIGIESALKYMDLKSGQKIEDISINKVFIGSCTNSRIEDLRAAAATVKGKKVSSKVQAIVVPGSGRVKRQAEQEGLDKIFTAAGFEWRNPGCSMCLAMNDDVLEPGDRCASTSNRNFEGRQGKGGRTHLVGPEMAAAAAIEGHFVDIRNWK</sequence>
<evidence type="ECO:0000255" key="1">
    <source>
        <dbReference type="HAMAP-Rule" id="MF_01026"/>
    </source>
</evidence>
<dbReference type="EC" id="4.2.1.33" evidence="1"/>
<dbReference type="EMBL" id="AE010300">
    <property type="protein sequence ID" value="AAN49294.1"/>
    <property type="molecule type" value="Genomic_DNA"/>
</dbReference>
<dbReference type="RefSeq" id="NP_712276.1">
    <property type="nucleotide sequence ID" value="NC_004342.2"/>
</dbReference>
<dbReference type="RefSeq" id="WP_000855526.1">
    <property type="nucleotide sequence ID" value="NC_004342.2"/>
</dbReference>
<dbReference type="SMR" id="Q8F4E6"/>
<dbReference type="FunCoup" id="Q8F4E6">
    <property type="interactions" value="453"/>
</dbReference>
<dbReference type="STRING" id="189518.LA_2095"/>
<dbReference type="PaxDb" id="189518-LA_2095"/>
<dbReference type="EnsemblBacteria" id="AAN49294">
    <property type="protein sequence ID" value="AAN49294"/>
    <property type="gene ID" value="LA_2095"/>
</dbReference>
<dbReference type="GeneID" id="61141718"/>
<dbReference type="KEGG" id="lil:LA_2095"/>
<dbReference type="PATRIC" id="fig|189518.3.peg.2090"/>
<dbReference type="HOGENOM" id="CLU_006714_3_4_12"/>
<dbReference type="InParanoid" id="Q8F4E6"/>
<dbReference type="OrthoDB" id="9802769at2"/>
<dbReference type="BioCyc" id="MetaCyc:MONOMER-11896"/>
<dbReference type="UniPathway" id="UPA00048">
    <property type="reaction ID" value="UER00071"/>
</dbReference>
<dbReference type="Proteomes" id="UP000001408">
    <property type="component" value="Chromosome I"/>
</dbReference>
<dbReference type="GO" id="GO:0003861">
    <property type="term" value="F:3-isopropylmalate dehydratase activity"/>
    <property type="evidence" value="ECO:0007669"/>
    <property type="project" value="UniProtKB-UniRule"/>
</dbReference>
<dbReference type="GO" id="GO:0051539">
    <property type="term" value="F:4 iron, 4 sulfur cluster binding"/>
    <property type="evidence" value="ECO:0007669"/>
    <property type="project" value="UniProtKB-KW"/>
</dbReference>
<dbReference type="GO" id="GO:0046872">
    <property type="term" value="F:metal ion binding"/>
    <property type="evidence" value="ECO:0007669"/>
    <property type="project" value="UniProtKB-KW"/>
</dbReference>
<dbReference type="GO" id="GO:0009098">
    <property type="term" value="P:L-leucine biosynthetic process"/>
    <property type="evidence" value="ECO:0007669"/>
    <property type="project" value="UniProtKB-UniRule"/>
</dbReference>
<dbReference type="CDD" id="cd01583">
    <property type="entry name" value="IPMI"/>
    <property type="match status" value="1"/>
</dbReference>
<dbReference type="FunFam" id="3.30.499.10:FF:000007">
    <property type="entry name" value="3-isopropylmalate dehydratase large subunit"/>
    <property type="match status" value="1"/>
</dbReference>
<dbReference type="Gene3D" id="3.30.499.10">
    <property type="entry name" value="Aconitase, domain 3"/>
    <property type="match status" value="2"/>
</dbReference>
<dbReference type="HAMAP" id="MF_01026">
    <property type="entry name" value="LeuC_type1"/>
    <property type="match status" value="1"/>
</dbReference>
<dbReference type="InterPro" id="IPR004430">
    <property type="entry name" value="3-IsopropMal_deHydase_lsu"/>
</dbReference>
<dbReference type="InterPro" id="IPR015931">
    <property type="entry name" value="Acnase/IPM_dHydase_lsu_aba_1/3"/>
</dbReference>
<dbReference type="InterPro" id="IPR001030">
    <property type="entry name" value="Acoase/IPM_deHydtase_lsu_aba"/>
</dbReference>
<dbReference type="InterPro" id="IPR018136">
    <property type="entry name" value="Aconitase_4Fe-4S_BS"/>
</dbReference>
<dbReference type="InterPro" id="IPR036008">
    <property type="entry name" value="Aconitase_4Fe-4S_dom"/>
</dbReference>
<dbReference type="InterPro" id="IPR050067">
    <property type="entry name" value="IPM_dehydratase_rel_enz"/>
</dbReference>
<dbReference type="InterPro" id="IPR033941">
    <property type="entry name" value="IPMI_cat"/>
</dbReference>
<dbReference type="NCBIfam" id="TIGR00170">
    <property type="entry name" value="leuC"/>
    <property type="match status" value="1"/>
</dbReference>
<dbReference type="NCBIfam" id="NF004016">
    <property type="entry name" value="PRK05478.1"/>
    <property type="match status" value="1"/>
</dbReference>
<dbReference type="NCBIfam" id="NF009116">
    <property type="entry name" value="PRK12466.1"/>
    <property type="match status" value="1"/>
</dbReference>
<dbReference type="PANTHER" id="PTHR43822:SF9">
    <property type="entry name" value="3-ISOPROPYLMALATE DEHYDRATASE"/>
    <property type="match status" value="1"/>
</dbReference>
<dbReference type="PANTHER" id="PTHR43822">
    <property type="entry name" value="HOMOACONITASE, MITOCHONDRIAL-RELATED"/>
    <property type="match status" value="1"/>
</dbReference>
<dbReference type="Pfam" id="PF00330">
    <property type="entry name" value="Aconitase"/>
    <property type="match status" value="1"/>
</dbReference>
<dbReference type="PRINTS" id="PR00415">
    <property type="entry name" value="ACONITASE"/>
</dbReference>
<dbReference type="SUPFAM" id="SSF53732">
    <property type="entry name" value="Aconitase iron-sulfur domain"/>
    <property type="match status" value="1"/>
</dbReference>
<dbReference type="PROSITE" id="PS00450">
    <property type="entry name" value="ACONITASE_1"/>
    <property type="match status" value="1"/>
</dbReference>
<dbReference type="PROSITE" id="PS01244">
    <property type="entry name" value="ACONITASE_2"/>
    <property type="match status" value="1"/>
</dbReference>
<protein>
    <recommendedName>
        <fullName evidence="1">3-isopropylmalate dehydratase large subunit</fullName>
        <ecNumber evidence="1">4.2.1.33</ecNumber>
    </recommendedName>
    <alternativeName>
        <fullName evidence="1">Alpha-IPM isomerase</fullName>
        <shortName evidence="1">IPMI</shortName>
    </alternativeName>
    <alternativeName>
        <fullName evidence="1">Isopropylmalate isomerase</fullName>
    </alternativeName>
</protein>
<reference key="1">
    <citation type="journal article" date="2003" name="Nature">
        <title>Unique physiological and pathogenic features of Leptospira interrogans revealed by whole-genome sequencing.</title>
        <authorList>
            <person name="Ren S.-X."/>
            <person name="Fu G."/>
            <person name="Jiang X.-G."/>
            <person name="Zeng R."/>
            <person name="Miao Y.-G."/>
            <person name="Xu H."/>
            <person name="Zhang Y.-X."/>
            <person name="Xiong H."/>
            <person name="Lu G."/>
            <person name="Lu L.-F."/>
            <person name="Jiang H.-Q."/>
            <person name="Jia J."/>
            <person name="Tu Y.-F."/>
            <person name="Jiang J.-X."/>
            <person name="Gu W.-Y."/>
            <person name="Zhang Y.-Q."/>
            <person name="Cai Z."/>
            <person name="Sheng H.-H."/>
            <person name="Yin H.-F."/>
            <person name="Zhang Y."/>
            <person name="Zhu G.-F."/>
            <person name="Wan M."/>
            <person name="Huang H.-L."/>
            <person name="Qian Z."/>
            <person name="Wang S.-Y."/>
            <person name="Ma W."/>
            <person name="Yao Z.-J."/>
            <person name="Shen Y."/>
            <person name="Qiang B.-Q."/>
            <person name="Xia Q.-C."/>
            <person name="Guo X.-K."/>
            <person name="Danchin A."/>
            <person name="Saint Girons I."/>
            <person name="Somerville R.L."/>
            <person name="Wen Y.-M."/>
            <person name="Shi M.-H."/>
            <person name="Chen Z."/>
            <person name="Xu J.-G."/>
            <person name="Zhao G.-P."/>
        </authorList>
    </citation>
    <scope>NUCLEOTIDE SEQUENCE [LARGE SCALE GENOMIC DNA]</scope>
    <source>
        <strain>56601</strain>
    </source>
</reference>
<name>LEUC_LEPIN</name>
<gene>
    <name evidence="1" type="primary">leuC</name>
    <name type="ordered locus">LA_2095</name>
</gene>
<accession>Q8F4E6</accession>
<organism>
    <name type="scientific">Leptospira interrogans serogroup Icterohaemorrhagiae serovar Lai (strain 56601)</name>
    <dbReference type="NCBI Taxonomy" id="189518"/>
    <lineage>
        <taxon>Bacteria</taxon>
        <taxon>Pseudomonadati</taxon>
        <taxon>Spirochaetota</taxon>
        <taxon>Spirochaetia</taxon>
        <taxon>Leptospirales</taxon>
        <taxon>Leptospiraceae</taxon>
        <taxon>Leptospira</taxon>
    </lineage>
</organism>
<comment type="function">
    <text evidence="1">Catalyzes the isomerization between 2-isopropylmalate and 3-isopropylmalate, via the formation of 2-isopropylmaleate.</text>
</comment>
<comment type="catalytic activity">
    <reaction evidence="1">
        <text>(2R,3S)-3-isopropylmalate = (2S)-2-isopropylmalate</text>
        <dbReference type="Rhea" id="RHEA:32287"/>
        <dbReference type="ChEBI" id="CHEBI:1178"/>
        <dbReference type="ChEBI" id="CHEBI:35121"/>
        <dbReference type="EC" id="4.2.1.33"/>
    </reaction>
</comment>
<comment type="cofactor">
    <cofactor evidence="1">
        <name>[4Fe-4S] cluster</name>
        <dbReference type="ChEBI" id="CHEBI:49883"/>
    </cofactor>
    <text evidence="1">Binds 1 [4Fe-4S] cluster per subunit.</text>
</comment>
<comment type="pathway">
    <text evidence="1">Amino-acid biosynthesis; L-leucine biosynthesis; L-leucine from 3-methyl-2-oxobutanoate: step 2/4.</text>
</comment>
<comment type="subunit">
    <text evidence="1">Heterodimer of LeuC and LeuD.</text>
</comment>
<comment type="similarity">
    <text evidence="1">Belongs to the aconitase/IPM isomerase family. LeuC type 1 subfamily.</text>
</comment>
<feature type="chain" id="PRO_0000076755" description="3-isopropylmalate dehydratase large subunit">
    <location>
        <begin position="1"/>
        <end position="465"/>
    </location>
</feature>
<feature type="binding site" evidence="1">
    <location>
        <position position="346"/>
    </location>
    <ligand>
        <name>[4Fe-4S] cluster</name>
        <dbReference type="ChEBI" id="CHEBI:49883"/>
    </ligand>
</feature>
<feature type="binding site" evidence="1">
    <location>
        <position position="406"/>
    </location>
    <ligand>
        <name>[4Fe-4S] cluster</name>
        <dbReference type="ChEBI" id="CHEBI:49883"/>
    </ligand>
</feature>
<feature type="binding site" evidence="1">
    <location>
        <position position="409"/>
    </location>
    <ligand>
        <name>[4Fe-4S] cluster</name>
        <dbReference type="ChEBI" id="CHEBI:49883"/>
    </ligand>
</feature>
<proteinExistence type="inferred from homology"/>
<keyword id="KW-0004">4Fe-4S</keyword>
<keyword id="KW-0028">Amino-acid biosynthesis</keyword>
<keyword id="KW-0100">Branched-chain amino acid biosynthesis</keyword>
<keyword id="KW-0408">Iron</keyword>
<keyword id="KW-0411">Iron-sulfur</keyword>
<keyword id="KW-0432">Leucine biosynthesis</keyword>
<keyword id="KW-0456">Lyase</keyword>
<keyword id="KW-0479">Metal-binding</keyword>
<keyword id="KW-1185">Reference proteome</keyword>